<keyword id="KW-0328">Glycosyltransferase</keyword>
<keyword id="KW-0808">Transferase</keyword>
<comment type="function">
    <text evidence="2">Catalyzes the reversible phosphorolytic breakdown of the N-glycosidic bond in the beta-(deoxy)ribonucleoside molecules, with the formation of the corresponding free purine bases and pentose-1-phosphate.</text>
</comment>
<comment type="catalytic activity">
    <reaction evidence="2">
        <text>a purine D-ribonucleoside + phosphate = a purine nucleobase + alpha-D-ribose 1-phosphate</text>
        <dbReference type="Rhea" id="RHEA:19805"/>
        <dbReference type="ChEBI" id="CHEBI:26386"/>
        <dbReference type="ChEBI" id="CHEBI:43474"/>
        <dbReference type="ChEBI" id="CHEBI:57720"/>
        <dbReference type="ChEBI" id="CHEBI:142355"/>
        <dbReference type="EC" id="2.4.2.1"/>
    </reaction>
</comment>
<comment type="catalytic activity">
    <reaction evidence="2">
        <text>a purine 2'-deoxy-D-ribonucleoside + phosphate = a purine nucleobase + 2-deoxy-alpha-D-ribose 1-phosphate</text>
        <dbReference type="Rhea" id="RHEA:36431"/>
        <dbReference type="ChEBI" id="CHEBI:26386"/>
        <dbReference type="ChEBI" id="CHEBI:43474"/>
        <dbReference type="ChEBI" id="CHEBI:57259"/>
        <dbReference type="ChEBI" id="CHEBI:142361"/>
        <dbReference type="EC" id="2.4.2.1"/>
    </reaction>
</comment>
<comment type="subunit">
    <text evidence="2">Homohexamer; trimer of homodimers.</text>
</comment>
<comment type="similarity">
    <text evidence="2">Belongs to the PNP/UDP phosphorylase family.</text>
</comment>
<name>DEOD_HELPS</name>
<gene>
    <name evidence="2" type="primary">deoD</name>
    <name type="ordered locus">HPSH_06105</name>
</gene>
<evidence type="ECO:0000250" key="1">
    <source>
        <dbReference type="UniProtKB" id="P50389"/>
    </source>
</evidence>
<evidence type="ECO:0000255" key="2">
    <source>
        <dbReference type="HAMAP-Rule" id="MF_01627"/>
    </source>
</evidence>
<sequence>MTPHINAKIGDFYPQCLLCGDPLRVSYIAKKFLQDAKEITNVRNMLGFSGKYKGKGISLMGHGMGIASCTIYVTELIKTYQVKELLRIGTCGAISPKVGLKDIIMAMGASTDSKTNRVRFLNHDLSATPDFELSLRAYQTAKRLGIDLKVGNVFSSDFFYSFETHAFDLMVQYNHLAIEMEAAGLYATAMELNAKALCLCSVSDHLITKEALSPKERVESFDNMIILALEMMTQ</sequence>
<dbReference type="EC" id="2.4.2.1" evidence="2"/>
<dbReference type="EMBL" id="CP001072">
    <property type="protein sequence ID" value="ACD48623.1"/>
    <property type="molecule type" value="Genomic_DNA"/>
</dbReference>
<dbReference type="RefSeq" id="WP_000187687.1">
    <property type="nucleotide sequence ID" value="NC_010698.2"/>
</dbReference>
<dbReference type="SMR" id="B2UUU1"/>
<dbReference type="KEGG" id="hps:HPSH_06105"/>
<dbReference type="HOGENOM" id="CLU_068457_2_0_7"/>
<dbReference type="GO" id="GO:0005829">
    <property type="term" value="C:cytosol"/>
    <property type="evidence" value="ECO:0007669"/>
    <property type="project" value="TreeGrafter"/>
</dbReference>
<dbReference type="GO" id="GO:0004731">
    <property type="term" value="F:purine-nucleoside phosphorylase activity"/>
    <property type="evidence" value="ECO:0007669"/>
    <property type="project" value="UniProtKB-EC"/>
</dbReference>
<dbReference type="GO" id="GO:0006152">
    <property type="term" value="P:purine nucleoside catabolic process"/>
    <property type="evidence" value="ECO:0007669"/>
    <property type="project" value="TreeGrafter"/>
</dbReference>
<dbReference type="CDD" id="cd09006">
    <property type="entry name" value="PNP_EcPNPI-like"/>
    <property type="match status" value="1"/>
</dbReference>
<dbReference type="Gene3D" id="3.40.50.1580">
    <property type="entry name" value="Nucleoside phosphorylase domain"/>
    <property type="match status" value="1"/>
</dbReference>
<dbReference type="HAMAP" id="MF_01627">
    <property type="entry name" value="Pur_nucleosid_phosp"/>
    <property type="match status" value="1"/>
</dbReference>
<dbReference type="InterPro" id="IPR004402">
    <property type="entry name" value="DeoD-type"/>
</dbReference>
<dbReference type="InterPro" id="IPR018016">
    <property type="entry name" value="Nucleoside_phosphorylase_CS"/>
</dbReference>
<dbReference type="InterPro" id="IPR000845">
    <property type="entry name" value="Nucleoside_phosphorylase_d"/>
</dbReference>
<dbReference type="InterPro" id="IPR035994">
    <property type="entry name" value="Nucleoside_phosphorylase_sf"/>
</dbReference>
<dbReference type="NCBIfam" id="TIGR00107">
    <property type="entry name" value="deoD"/>
    <property type="match status" value="1"/>
</dbReference>
<dbReference type="NCBIfam" id="NF004489">
    <property type="entry name" value="PRK05819.1"/>
    <property type="match status" value="1"/>
</dbReference>
<dbReference type="PANTHER" id="PTHR43691:SF11">
    <property type="entry name" value="FI09636P-RELATED"/>
    <property type="match status" value="1"/>
</dbReference>
<dbReference type="PANTHER" id="PTHR43691">
    <property type="entry name" value="URIDINE PHOSPHORYLASE"/>
    <property type="match status" value="1"/>
</dbReference>
<dbReference type="Pfam" id="PF01048">
    <property type="entry name" value="PNP_UDP_1"/>
    <property type="match status" value="1"/>
</dbReference>
<dbReference type="SUPFAM" id="SSF53167">
    <property type="entry name" value="Purine and uridine phosphorylases"/>
    <property type="match status" value="1"/>
</dbReference>
<dbReference type="PROSITE" id="PS01232">
    <property type="entry name" value="PNP_UDP_1"/>
    <property type="match status" value="1"/>
</dbReference>
<protein>
    <recommendedName>
        <fullName evidence="2">Purine nucleoside phosphorylase DeoD-type</fullName>
        <shortName evidence="2">PNP</shortName>
        <ecNumber evidence="2">2.4.2.1</ecNumber>
    </recommendedName>
</protein>
<accession>B2UUU1</accession>
<feature type="chain" id="PRO_1000186202" description="Purine nucleoside phosphorylase DeoD-type">
    <location>
        <begin position="1"/>
        <end position="234"/>
    </location>
</feature>
<feature type="active site" description="Proton donor" evidence="2">
    <location>
        <position position="204"/>
    </location>
</feature>
<feature type="binding site" evidence="1">
    <location>
        <position position="4"/>
    </location>
    <ligand>
        <name>a purine D-ribonucleoside</name>
        <dbReference type="ChEBI" id="CHEBI:142355"/>
        <note>ligand shared between dimeric partners</note>
    </ligand>
</feature>
<feature type="binding site" description="in other chain" evidence="1">
    <location>
        <position position="20"/>
    </location>
    <ligand>
        <name>phosphate</name>
        <dbReference type="ChEBI" id="CHEBI:43474"/>
        <note>ligand shared between dimeric partners</note>
    </ligand>
</feature>
<feature type="binding site" description="in other chain" evidence="1">
    <location>
        <position position="24"/>
    </location>
    <ligand>
        <name>phosphate</name>
        <dbReference type="ChEBI" id="CHEBI:43474"/>
        <note>ligand shared between dimeric partners</note>
    </ligand>
</feature>
<feature type="binding site" evidence="1">
    <location>
        <position position="43"/>
    </location>
    <ligand>
        <name>phosphate</name>
        <dbReference type="ChEBI" id="CHEBI:43474"/>
        <note>ligand shared between dimeric partners</note>
    </ligand>
</feature>
<feature type="binding site" description="in other chain" evidence="1">
    <location>
        <begin position="87"/>
        <end position="90"/>
    </location>
    <ligand>
        <name>phosphate</name>
        <dbReference type="ChEBI" id="CHEBI:43474"/>
        <note>ligand shared between dimeric partners</note>
    </ligand>
</feature>
<feature type="binding site" description="in other chain" evidence="1">
    <location>
        <begin position="179"/>
        <end position="181"/>
    </location>
    <ligand>
        <name>a purine D-ribonucleoside</name>
        <dbReference type="ChEBI" id="CHEBI:142355"/>
        <note>ligand shared between dimeric partners</note>
    </ligand>
</feature>
<feature type="binding site" description="in other chain" evidence="1">
    <location>
        <begin position="203"/>
        <end position="204"/>
    </location>
    <ligand>
        <name>a purine D-ribonucleoside</name>
        <dbReference type="ChEBI" id="CHEBI:142355"/>
        <note>ligand shared between dimeric partners</note>
    </ligand>
</feature>
<feature type="site" description="Important for catalytic activity" evidence="2">
    <location>
        <position position="217"/>
    </location>
</feature>
<organism>
    <name type="scientific">Helicobacter pylori (strain Shi470)</name>
    <dbReference type="NCBI Taxonomy" id="512562"/>
    <lineage>
        <taxon>Bacteria</taxon>
        <taxon>Pseudomonadati</taxon>
        <taxon>Campylobacterota</taxon>
        <taxon>Epsilonproteobacteria</taxon>
        <taxon>Campylobacterales</taxon>
        <taxon>Helicobacteraceae</taxon>
        <taxon>Helicobacter</taxon>
    </lineage>
</organism>
<proteinExistence type="inferred from homology"/>
<reference key="1">
    <citation type="submission" date="2008-05" db="EMBL/GenBank/DDBJ databases">
        <title>Genome sequence of Helicobacter pylori from the remote Amazon: traces of Asian ancestry of the first Americans.</title>
        <authorList>
            <person name="Kersulyte D."/>
            <person name="Kalia A."/>
            <person name="Gilman R.H."/>
            <person name="Berg D.E."/>
        </authorList>
    </citation>
    <scope>NUCLEOTIDE SEQUENCE [LARGE SCALE GENOMIC DNA]</scope>
    <source>
        <strain>Shi470</strain>
    </source>
</reference>